<sequence length="489" mass="54290">MITIPYLTAVSTYFSYGLLFAFGQLRDFFRRFIDWWFTSNLQGYAPICLGHEDFYIRRLYHRIQDCFERPISSAPDAWFDVVERYSNDNNKTLKRTTKTSRCLNLGSYNYLGFGSFDEYCTPRVIESLKKFSASTCSSRVDAGTTSVHAELEECVTRFVGKPAAVVFGMGYATNSAIIPVLIGKGGLIISDSLNHSSIVNGARGSGATIRVFQHNTPSHLERVLREQIAEGQPRTHRPWKKIIVVVEGIYSMEGEICHLPEVVAICKKYKAYVYLDEAHSIGAIGKTGKGICELLGVDTADVDVMMGTFTKSFGSCGGYIAGSKELIQYLKHQCPAHLYATSIPTPSAQQIISAIKVILGEDGSNRGAQKLARIRENSNFFRAELQKMGFEVLGDNDSPVMPIMLYNPAKIPAFSRECLRQKVAVVVVGFPATPLLLARARICISASHSREDLIRALKVISKVGDLSGIKYFPAEPKKIEQSKNDIKLD</sequence>
<dbReference type="EC" id="2.3.1.50" evidence="9"/>
<dbReference type="EMBL" id="AB046384">
    <property type="protein sequence ID" value="BAB03231.1"/>
    <property type="molecule type" value="mRNA"/>
</dbReference>
<dbReference type="EMBL" id="AB025633">
    <property type="protein sequence ID" value="BAA97234.1"/>
    <property type="molecule type" value="Genomic_DNA"/>
</dbReference>
<dbReference type="EMBL" id="CP002688">
    <property type="protein sequence ID" value="AED93196.1"/>
    <property type="molecule type" value="Genomic_DNA"/>
</dbReference>
<dbReference type="EMBL" id="CP002688">
    <property type="protein sequence ID" value="AED93197.1"/>
    <property type="molecule type" value="Genomic_DNA"/>
</dbReference>
<dbReference type="EMBL" id="AY050829">
    <property type="protein sequence ID" value="AAK92764.1"/>
    <property type="molecule type" value="mRNA"/>
</dbReference>
<dbReference type="EMBL" id="AY133827">
    <property type="protein sequence ID" value="AAM91761.1"/>
    <property type="molecule type" value="mRNA"/>
</dbReference>
<dbReference type="EMBL" id="AK316942">
    <property type="protein sequence ID" value="BAH19645.1"/>
    <property type="molecule type" value="mRNA"/>
</dbReference>
<dbReference type="RefSeq" id="NP_001031932.1">
    <property type="nucleotide sequence ID" value="NM_001036855.1"/>
</dbReference>
<dbReference type="RefSeq" id="NP_197756.1">
    <property type="nucleotide sequence ID" value="NM_122272.3"/>
</dbReference>
<dbReference type="PDB" id="7YJK">
    <property type="method" value="EM"/>
    <property type="resolution" value="3.20 A"/>
    <property type="chains" value="B/F=1-489"/>
</dbReference>
<dbReference type="PDB" id="7YJM">
    <property type="method" value="EM"/>
    <property type="resolution" value="3.20 A"/>
    <property type="chains" value="B=1-489"/>
</dbReference>
<dbReference type="PDB" id="7YJN">
    <property type="method" value="EM"/>
    <property type="resolution" value="3.40 A"/>
    <property type="chains" value="B=1-489"/>
</dbReference>
<dbReference type="PDB" id="7YJO">
    <property type="method" value="EM"/>
    <property type="resolution" value="2.80 A"/>
    <property type="chains" value="B=6-489"/>
</dbReference>
<dbReference type="PDBsum" id="7YJK"/>
<dbReference type="PDBsum" id="7YJM"/>
<dbReference type="PDBsum" id="7YJN"/>
<dbReference type="PDBsum" id="7YJO"/>
<dbReference type="EMDB" id="EMD-33873"/>
<dbReference type="EMDB" id="EMD-33874"/>
<dbReference type="EMDB" id="EMD-33875"/>
<dbReference type="EMDB" id="EMD-33876"/>
<dbReference type="SMR" id="Q9LSZ9"/>
<dbReference type="BioGRID" id="17707">
    <property type="interactions" value="1"/>
</dbReference>
<dbReference type="FunCoup" id="Q9LSZ9">
    <property type="interactions" value="2812"/>
</dbReference>
<dbReference type="STRING" id="3702.Q9LSZ9"/>
<dbReference type="PaxDb" id="3702-AT5G23670.1"/>
<dbReference type="ProteomicsDB" id="237130"/>
<dbReference type="EnsemblPlants" id="AT5G23670.1">
    <property type="protein sequence ID" value="AT5G23670.1"/>
    <property type="gene ID" value="AT5G23670"/>
</dbReference>
<dbReference type="EnsemblPlants" id="AT5G23670.2">
    <property type="protein sequence ID" value="AT5G23670.2"/>
    <property type="gene ID" value="AT5G23670"/>
</dbReference>
<dbReference type="GeneID" id="832432"/>
<dbReference type="Gramene" id="AT5G23670.1">
    <property type="protein sequence ID" value="AT5G23670.1"/>
    <property type="gene ID" value="AT5G23670"/>
</dbReference>
<dbReference type="Gramene" id="AT5G23670.2">
    <property type="protein sequence ID" value="AT5G23670.2"/>
    <property type="gene ID" value="AT5G23670"/>
</dbReference>
<dbReference type="KEGG" id="ath:AT5G23670"/>
<dbReference type="Araport" id="AT5G23670"/>
<dbReference type="TAIR" id="AT5G23670">
    <property type="gene designation" value="LCB2"/>
</dbReference>
<dbReference type="eggNOG" id="KOG1357">
    <property type="taxonomic scope" value="Eukaryota"/>
</dbReference>
<dbReference type="HOGENOM" id="CLU_015846_7_0_1"/>
<dbReference type="InParanoid" id="Q9LSZ9"/>
<dbReference type="OMA" id="QPRANGC"/>
<dbReference type="PhylomeDB" id="Q9LSZ9"/>
<dbReference type="BioCyc" id="ARA:AT5G23670-MONOMER"/>
<dbReference type="BioCyc" id="MetaCyc:AT5G23670-MONOMER"/>
<dbReference type="BRENDA" id="2.3.1.50">
    <property type="organism ID" value="399"/>
</dbReference>
<dbReference type="UniPathway" id="UPA00222"/>
<dbReference type="PRO" id="PR:Q9LSZ9"/>
<dbReference type="Proteomes" id="UP000006548">
    <property type="component" value="Chromosome 5"/>
</dbReference>
<dbReference type="ExpressionAtlas" id="Q9LSZ9">
    <property type="expression patterns" value="baseline and differential"/>
</dbReference>
<dbReference type="GO" id="GO:0005783">
    <property type="term" value="C:endoplasmic reticulum"/>
    <property type="evidence" value="ECO:0000314"/>
    <property type="project" value="TAIR"/>
</dbReference>
<dbReference type="GO" id="GO:0005789">
    <property type="term" value="C:endoplasmic reticulum membrane"/>
    <property type="evidence" value="ECO:0007669"/>
    <property type="project" value="UniProtKB-SubCell"/>
</dbReference>
<dbReference type="GO" id="GO:0016020">
    <property type="term" value="C:membrane"/>
    <property type="evidence" value="ECO:0000314"/>
    <property type="project" value="TAIR"/>
</dbReference>
<dbReference type="GO" id="GO:0005773">
    <property type="term" value="C:vacuole"/>
    <property type="evidence" value="ECO:0007005"/>
    <property type="project" value="TAIR"/>
</dbReference>
<dbReference type="GO" id="GO:0030170">
    <property type="term" value="F:pyridoxal phosphate binding"/>
    <property type="evidence" value="ECO:0007669"/>
    <property type="project" value="InterPro"/>
</dbReference>
<dbReference type="GO" id="GO:0004758">
    <property type="term" value="F:serine C-palmitoyltransferase activity"/>
    <property type="evidence" value="ECO:0000314"/>
    <property type="project" value="TAIR"/>
</dbReference>
<dbReference type="GO" id="GO:0009640">
    <property type="term" value="P:photomorphogenesis"/>
    <property type="evidence" value="ECO:0000315"/>
    <property type="project" value="TAIR"/>
</dbReference>
<dbReference type="GO" id="GO:0009555">
    <property type="term" value="P:pollen development"/>
    <property type="evidence" value="ECO:0000315"/>
    <property type="project" value="TAIR"/>
</dbReference>
<dbReference type="GO" id="GO:0043067">
    <property type="term" value="P:regulation of programmed cell death"/>
    <property type="evidence" value="ECO:0000315"/>
    <property type="project" value="UniProtKB"/>
</dbReference>
<dbReference type="GO" id="GO:0046512">
    <property type="term" value="P:sphingosine biosynthetic process"/>
    <property type="evidence" value="ECO:0000314"/>
    <property type="project" value="TAIR"/>
</dbReference>
<dbReference type="CDD" id="cd06454">
    <property type="entry name" value="KBL_like"/>
    <property type="match status" value="1"/>
</dbReference>
<dbReference type="Gene3D" id="3.90.1150.10">
    <property type="entry name" value="Aspartate Aminotransferase, domain 1"/>
    <property type="match status" value="1"/>
</dbReference>
<dbReference type="Gene3D" id="3.40.640.10">
    <property type="entry name" value="Type I PLP-dependent aspartate aminotransferase-like (Major domain)"/>
    <property type="match status" value="1"/>
</dbReference>
<dbReference type="InterPro" id="IPR001917">
    <property type="entry name" value="Aminotrans_II_pyridoxalP_BS"/>
</dbReference>
<dbReference type="InterPro" id="IPR004839">
    <property type="entry name" value="Aminotransferase_I/II_large"/>
</dbReference>
<dbReference type="InterPro" id="IPR050087">
    <property type="entry name" value="AON_synthase_class-II"/>
</dbReference>
<dbReference type="InterPro" id="IPR015424">
    <property type="entry name" value="PyrdxlP-dep_Trfase"/>
</dbReference>
<dbReference type="InterPro" id="IPR015421">
    <property type="entry name" value="PyrdxlP-dep_Trfase_major"/>
</dbReference>
<dbReference type="InterPro" id="IPR015422">
    <property type="entry name" value="PyrdxlP-dep_Trfase_small"/>
</dbReference>
<dbReference type="PANTHER" id="PTHR13693">
    <property type="entry name" value="CLASS II AMINOTRANSFERASE/8-AMINO-7-OXONONANOATE SYNTHASE"/>
    <property type="match status" value="1"/>
</dbReference>
<dbReference type="PANTHER" id="PTHR13693:SF3">
    <property type="entry name" value="LD36009P"/>
    <property type="match status" value="1"/>
</dbReference>
<dbReference type="Pfam" id="PF00155">
    <property type="entry name" value="Aminotran_1_2"/>
    <property type="match status" value="1"/>
</dbReference>
<dbReference type="SUPFAM" id="SSF53383">
    <property type="entry name" value="PLP-dependent transferases"/>
    <property type="match status" value="1"/>
</dbReference>
<dbReference type="PROSITE" id="PS00599">
    <property type="entry name" value="AA_TRANSFER_CLASS_2"/>
    <property type="match status" value="1"/>
</dbReference>
<protein>
    <recommendedName>
        <fullName>Long chain base biosynthesis protein 2a</fullName>
        <shortName>AtLCB2a</shortName>
        <ecNumber evidence="9">2.3.1.50</ecNumber>
    </recommendedName>
    <alternativeName>
        <fullName>Long chain base biosynthesis protein 2</fullName>
        <shortName>AtLCB2</shortName>
    </alternativeName>
</protein>
<keyword id="KW-0002">3D-structure</keyword>
<keyword id="KW-0012">Acyltransferase</keyword>
<keyword id="KW-0053">Apoptosis</keyword>
<keyword id="KW-0256">Endoplasmic reticulum</keyword>
<keyword id="KW-0443">Lipid metabolism</keyword>
<keyword id="KW-0472">Membrane</keyword>
<keyword id="KW-0663">Pyridoxal phosphate</keyword>
<keyword id="KW-1185">Reference proteome</keyword>
<keyword id="KW-0746">Sphingolipid metabolism</keyword>
<keyword id="KW-0808">Transferase</keyword>
<keyword id="KW-0812">Transmembrane</keyword>
<keyword id="KW-1133">Transmembrane helix</keyword>
<name>LCB2A_ARATH</name>
<proteinExistence type="evidence at protein level"/>
<accession>Q9LSZ9</accession>
<accession>B9DFX8</accession>
<accession>Q9LRB4</accession>
<evidence type="ECO:0000250" key="1"/>
<evidence type="ECO:0000255" key="2"/>
<evidence type="ECO:0000269" key="3">
    <source>
    </source>
</evidence>
<evidence type="ECO:0000269" key="4">
    <source>
    </source>
</evidence>
<evidence type="ECO:0000269" key="5">
    <source>
    </source>
</evidence>
<evidence type="ECO:0000269" key="6">
    <source>
    </source>
</evidence>
<evidence type="ECO:0000269" key="7">
    <source>
    </source>
</evidence>
<evidence type="ECO:0000305" key="8"/>
<evidence type="ECO:0000305" key="9">
    <source>
    </source>
</evidence>
<evidence type="ECO:0007829" key="10">
    <source>
        <dbReference type="PDB" id="7YJK"/>
    </source>
</evidence>
<evidence type="ECO:0007829" key="11">
    <source>
        <dbReference type="PDB" id="7YJN"/>
    </source>
</evidence>
<evidence type="ECO:0007829" key="12">
    <source>
        <dbReference type="PDB" id="7YJO"/>
    </source>
</evidence>
<reference key="1">
    <citation type="journal article" date="2000" name="Biochem. Soc. Trans.">
        <title>Cloning and characterization of a cDNA encoding serine palmitoyltransferase in Arabidopsis thaliana.</title>
        <authorList>
            <person name="Tamura K."/>
            <person name="Nishiura H."/>
            <person name="Mori J."/>
            <person name="Imai H."/>
        </authorList>
    </citation>
    <scope>NUCLEOTIDE SEQUENCE [MRNA]</scope>
    <scope>TISSUE SPECIFICITY</scope>
</reference>
<reference key="2">
    <citation type="journal article" date="2001" name="Plant Cell Physiol.">
        <title>Characterization of an Arabidopsis cDNA encoding a subunit of serine palmitoyltransferase, the initial enzyme in sphingolipid biosynthesis.</title>
        <authorList>
            <person name="Tamura K."/>
            <person name="Mitsuhashi N."/>
            <person name="Hara-Nishimura I."/>
            <person name="Imai H."/>
        </authorList>
    </citation>
    <scope>NUCLEOTIDE SEQUENCE [MRNA]</scope>
    <scope>FUNCTION</scope>
    <scope>CATALYTIC ACTIVITY</scope>
    <scope>TISSUE SPECIFICITY</scope>
    <scope>SUBCELLULAR LOCATION</scope>
</reference>
<reference key="3">
    <citation type="journal article" date="2000" name="DNA Res.">
        <title>Structural analysis of Arabidopsis thaliana chromosome 5. X. Sequence features of the regions of 3,076,755 bp covered by sixty P1 and TAC clones.</title>
        <authorList>
            <person name="Sato S."/>
            <person name="Nakamura Y."/>
            <person name="Kaneko T."/>
            <person name="Katoh T."/>
            <person name="Asamizu E."/>
            <person name="Kotani H."/>
            <person name="Tabata S."/>
        </authorList>
    </citation>
    <scope>NUCLEOTIDE SEQUENCE [LARGE SCALE GENOMIC DNA]</scope>
    <source>
        <strain>cv. Columbia</strain>
    </source>
</reference>
<reference key="4">
    <citation type="journal article" date="2017" name="Plant J.">
        <title>Araport11: a complete reannotation of the Arabidopsis thaliana reference genome.</title>
        <authorList>
            <person name="Cheng C.Y."/>
            <person name="Krishnakumar V."/>
            <person name="Chan A.P."/>
            <person name="Thibaud-Nissen F."/>
            <person name="Schobel S."/>
            <person name="Town C.D."/>
        </authorList>
    </citation>
    <scope>GENOME REANNOTATION</scope>
    <source>
        <strain>cv. Columbia</strain>
    </source>
</reference>
<reference key="5">
    <citation type="journal article" date="2003" name="Science">
        <title>Empirical analysis of transcriptional activity in the Arabidopsis genome.</title>
        <authorList>
            <person name="Yamada K."/>
            <person name="Lim J."/>
            <person name="Dale J.M."/>
            <person name="Chen H."/>
            <person name="Shinn P."/>
            <person name="Palm C.J."/>
            <person name="Southwick A.M."/>
            <person name="Wu H.C."/>
            <person name="Kim C.J."/>
            <person name="Nguyen M."/>
            <person name="Pham P.K."/>
            <person name="Cheuk R.F."/>
            <person name="Karlin-Newmann G."/>
            <person name="Liu S.X."/>
            <person name="Lam B."/>
            <person name="Sakano H."/>
            <person name="Wu T."/>
            <person name="Yu G."/>
            <person name="Miranda M."/>
            <person name="Quach H.L."/>
            <person name="Tripp M."/>
            <person name="Chang C.H."/>
            <person name="Lee J.M."/>
            <person name="Toriumi M.J."/>
            <person name="Chan M.M."/>
            <person name="Tang C.C."/>
            <person name="Onodera C.S."/>
            <person name="Deng J.M."/>
            <person name="Akiyama K."/>
            <person name="Ansari Y."/>
            <person name="Arakawa T."/>
            <person name="Banh J."/>
            <person name="Banno F."/>
            <person name="Bowser L."/>
            <person name="Brooks S.Y."/>
            <person name="Carninci P."/>
            <person name="Chao Q."/>
            <person name="Choy N."/>
            <person name="Enju A."/>
            <person name="Goldsmith A.D."/>
            <person name="Gurjal M."/>
            <person name="Hansen N.F."/>
            <person name="Hayashizaki Y."/>
            <person name="Johnson-Hopson C."/>
            <person name="Hsuan V.W."/>
            <person name="Iida K."/>
            <person name="Karnes M."/>
            <person name="Khan S."/>
            <person name="Koesema E."/>
            <person name="Ishida J."/>
            <person name="Jiang P.X."/>
            <person name="Jones T."/>
            <person name="Kawai J."/>
            <person name="Kamiya A."/>
            <person name="Meyers C."/>
            <person name="Nakajima M."/>
            <person name="Narusaka M."/>
            <person name="Seki M."/>
            <person name="Sakurai T."/>
            <person name="Satou M."/>
            <person name="Tamse R."/>
            <person name="Vaysberg M."/>
            <person name="Wallender E.K."/>
            <person name="Wong C."/>
            <person name="Yamamura Y."/>
            <person name="Yuan S."/>
            <person name="Shinozaki K."/>
            <person name="Davis R.W."/>
            <person name="Theologis A."/>
            <person name="Ecker J.R."/>
        </authorList>
    </citation>
    <scope>NUCLEOTIDE SEQUENCE [LARGE SCALE MRNA]</scope>
    <source>
        <strain>cv. Columbia</strain>
    </source>
</reference>
<reference key="6">
    <citation type="journal article" date="2009" name="DNA Res.">
        <title>Analysis of multiple occurrences of alternative splicing events in Arabidopsis thaliana using novel sequenced full-length cDNAs.</title>
        <authorList>
            <person name="Iida K."/>
            <person name="Fukami-Kobayashi K."/>
            <person name="Toyoda A."/>
            <person name="Sakaki Y."/>
            <person name="Kobayashi M."/>
            <person name="Seki M."/>
            <person name="Shinozaki K."/>
        </authorList>
    </citation>
    <scope>NUCLEOTIDE SEQUENCE [LARGE SCALE MRNA] OF 248-489</scope>
    <source>
        <strain>cv. Columbia</strain>
        <tissue>Rosette leaf</tissue>
    </source>
</reference>
<reference key="7">
    <citation type="journal article" date="2006" name="Plant Cell">
        <title>The essential nature of sphingolipids in plants as revealed by the functional identification and characterization of the Arabidopsis LCB1 subunit of serine palmitoyltransferase.</title>
        <authorList>
            <person name="Chen M."/>
            <person name="Han G."/>
            <person name="Dietrich C.R."/>
            <person name="Dunn T.M."/>
            <person name="Cahoon E.B."/>
        </authorList>
    </citation>
    <scope>SUBUNIT</scope>
</reference>
<reference key="8">
    <citation type="journal article" date="2008" name="Plant J.">
        <title>Loss-of-function mutations and inducible RNAi suppression of Arabidopsis LCB2 genes reveal the critical role of sphingolipids in gametophytic and sporophytic cell viability.</title>
        <authorList>
            <person name="Dietrich C.R."/>
            <person name="Han G."/>
            <person name="Chen M."/>
            <person name="Berg R.H."/>
            <person name="Dunn T.M."/>
            <person name="Cahoon E.B."/>
        </authorList>
    </citation>
    <scope>FUNCTION</scope>
    <scope>DISRUPTION PHENOTYPE</scope>
    <scope>TISSUE SPECIFICITY</scope>
    <scope>DEVELOPMENTAL STAGE</scope>
    <scope>SUBUNIT</scope>
</reference>
<reference key="9">
    <citation type="journal article" date="2011" name="New Phytol.">
        <title>MPK6, sphinganine and the LCB2a gene from serine palmitoyltransferase are required in the signaling pathway that mediates cell death induced by long chain bases in Arabidopsis.</title>
        <authorList>
            <person name="Saucedo-Garcia M."/>
            <person name="Guevara-Garcia A."/>
            <person name="Gonzalez-Solis A."/>
            <person name="Cruz-Garcia F."/>
            <person name="Vazquez-Santana S."/>
            <person name="Markham J.E."/>
            <person name="Lozano-Rosas M.G."/>
            <person name="Dietrich C.R."/>
            <person name="Ramos-Vega M."/>
            <person name="Cahoon E.B."/>
            <person name="Gavilanes-Ruiz M."/>
        </authorList>
    </citation>
    <scope>FUNCTION</scope>
</reference>
<gene>
    <name type="primary">LCB2a</name>
    <name type="synonym">LCB2</name>
    <name type="ordered locus">At5g23670</name>
    <name type="ORF">MQM1.6</name>
</gene>
<comment type="function">
    <text evidence="4 6 7">Serine palmitoyltransferase (SPT). The heterodimer formed with LCB1 constitutes the catalytic core. Involved in the regulation of the programmed cell death (PCD) signaling pathway. Plays an important role during male gametogenesis and embryogenesis.</text>
</comment>
<comment type="catalytic activity">
    <reaction evidence="9">
        <text>L-serine + hexadecanoyl-CoA + H(+) = 3-oxosphinganine + CO2 + CoA</text>
        <dbReference type="Rhea" id="RHEA:14761"/>
        <dbReference type="ChEBI" id="CHEBI:15378"/>
        <dbReference type="ChEBI" id="CHEBI:16526"/>
        <dbReference type="ChEBI" id="CHEBI:33384"/>
        <dbReference type="ChEBI" id="CHEBI:57287"/>
        <dbReference type="ChEBI" id="CHEBI:57379"/>
        <dbReference type="ChEBI" id="CHEBI:58299"/>
        <dbReference type="EC" id="2.3.1.50"/>
    </reaction>
</comment>
<comment type="cofactor">
    <cofactor evidence="1">
        <name>pyridoxal 5'-phosphate</name>
        <dbReference type="ChEBI" id="CHEBI:597326"/>
    </cofactor>
</comment>
<comment type="pathway">
    <text evidence="9">Lipid metabolism; sphingolipid metabolism.</text>
</comment>
<comment type="subunit">
    <text evidence="5 6">Heterodimer with LCB1. Component of the serine palmitoyltransferase (SPT) complex, composed of LCB1 and LCB2 (LCB2a or LCB2b).</text>
</comment>
<comment type="subcellular location">
    <subcellularLocation>
        <location evidence="4">Endoplasmic reticulum membrane</location>
        <topology evidence="4">Single-pass membrane protein</topology>
    </subcellularLocation>
</comment>
<comment type="tissue specificity">
    <text evidence="3 4 6">Ubiquitous. Detected in leaves, roots, stems, flowers and at a lower level in mature seeds.</text>
</comment>
<comment type="developmental stage">
    <text evidence="6">Detected at high levels in the petiole, sepals and petals in young flowers, but was not detected in the anthers during the early stages of pollen development.</text>
</comment>
<comment type="disruption phenotype">
    <text evidence="6">No visible phenotype. Lcb2a and lcb2b double mutant is not viable due to pollen lethality.</text>
</comment>
<comment type="miscellaneous">
    <text>The lcb2a-1 mutant is incapable of initiating programmed cell death (PCD) after induction by fumonisin B1 (FB1), a specific inhibitor of ceramide synthase.</text>
</comment>
<comment type="similarity">
    <text evidence="8">Belongs to the class-II pyridoxal-phosphate-dependent aminotransferase family.</text>
</comment>
<organism>
    <name type="scientific">Arabidopsis thaliana</name>
    <name type="common">Mouse-ear cress</name>
    <dbReference type="NCBI Taxonomy" id="3702"/>
    <lineage>
        <taxon>Eukaryota</taxon>
        <taxon>Viridiplantae</taxon>
        <taxon>Streptophyta</taxon>
        <taxon>Embryophyta</taxon>
        <taxon>Tracheophyta</taxon>
        <taxon>Spermatophyta</taxon>
        <taxon>Magnoliopsida</taxon>
        <taxon>eudicotyledons</taxon>
        <taxon>Gunneridae</taxon>
        <taxon>Pentapetalae</taxon>
        <taxon>rosids</taxon>
        <taxon>malvids</taxon>
        <taxon>Brassicales</taxon>
        <taxon>Brassicaceae</taxon>
        <taxon>Camelineae</taxon>
        <taxon>Arabidopsis</taxon>
    </lineage>
</organism>
<feature type="chain" id="PRO_0000419145" description="Long chain base biosynthesis protein 2a">
    <location>
        <begin position="1"/>
        <end position="489"/>
    </location>
</feature>
<feature type="transmembrane region" description="Helical" evidence="2">
    <location>
        <begin position="2"/>
        <end position="22"/>
    </location>
</feature>
<feature type="modified residue" description="N6-(pyridoxal phosphate)lysine" evidence="1">
    <location>
        <position position="311"/>
    </location>
</feature>
<feature type="sequence conflict" description="In Ref. 1 and 2; BAB03231." evidence="8" ref="1 2">
    <original>D</original>
    <variation>N</variation>
    <location>
        <position position="65"/>
    </location>
</feature>
<feature type="strand" evidence="10">
    <location>
        <begin position="2"/>
        <end position="5"/>
    </location>
</feature>
<feature type="helix" evidence="12">
    <location>
        <begin position="7"/>
        <end position="30"/>
    </location>
</feature>
<feature type="turn" evidence="12">
    <location>
        <begin position="50"/>
        <end position="53"/>
    </location>
</feature>
<feature type="helix" evidence="12">
    <location>
        <begin position="54"/>
        <end position="58"/>
    </location>
</feature>
<feature type="turn" evidence="12">
    <location>
        <begin position="59"/>
        <end position="62"/>
    </location>
</feature>
<feature type="strand" evidence="11">
    <location>
        <begin position="65"/>
        <end position="68"/>
    </location>
</feature>
<feature type="strand" evidence="12">
    <location>
        <begin position="71"/>
        <end position="73"/>
    </location>
</feature>
<feature type="strand" evidence="12">
    <location>
        <begin position="75"/>
        <end position="81"/>
    </location>
</feature>
<feature type="strand" evidence="12">
    <location>
        <begin position="88"/>
        <end position="91"/>
    </location>
</feature>
<feature type="strand" evidence="10">
    <location>
        <begin position="94"/>
        <end position="99"/>
    </location>
</feature>
<feature type="strand" evidence="12">
    <location>
        <begin position="100"/>
        <end position="104"/>
    </location>
</feature>
<feature type="strand" evidence="10">
    <location>
        <begin position="110"/>
        <end position="112"/>
    </location>
</feature>
<feature type="helix" evidence="12">
    <location>
        <begin position="120"/>
        <end position="131"/>
    </location>
</feature>
<feature type="strand" evidence="10">
    <location>
        <begin position="136"/>
        <end position="138"/>
    </location>
</feature>
<feature type="turn" evidence="12">
    <location>
        <begin position="139"/>
        <end position="142"/>
    </location>
</feature>
<feature type="helix" evidence="12">
    <location>
        <begin position="146"/>
        <end position="159"/>
    </location>
</feature>
<feature type="strand" evidence="12">
    <location>
        <begin position="161"/>
        <end position="168"/>
    </location>
</feature>
<feature type="helix" evidence="12">
    <location>
        <begin position="170"/>
        <end position="175"/>
    </location>
</feature>
<feature type="helix" evidence="12">
    <location>
        <begin position="178"/>
        <end position="181"/>
    </location>
</feature>
<feature type="strand" evidence="12">
    <location>
        <begin position="187"/>
        <end position="191"/>
    </location>
</feature>
<feature type="helix" evidence="12">
    <location>
        <begin position="196"/>
        <end position="204"/>
    </location>
</feature>
<feature type="strand" evidence="12">
    <location>
        <begin position="208"/>
        <end position="212"/>
    </location>
</feature>
<feature type="helix" evidence="12">
    <location>
        <begin position="217"/>
        <end position="230"/>
    </location>
</feature>
<feature type="strand" evidence="12">
    <location>
        <begin position="232"/>
        <end position="235"/>
    </location>
</feature>
<feature type="strand" evidence="12">
    <location>
        <begin position="242"/>
        <end position="250"/>
    </location>
</feature>
<feature type="turn" evidence="12">
    <location>
        <begin position="251"/>
        <end position="254"/>
    </location>
</feature>
<feature type="helix" evidence="12">
    <location>
        <begin position="259"/>
        <end position="269"/>
    </location>
</feature>
<feature type="strand" evidence="12">
    <location>
        <begin position="272"/>
        <end position="276"/>
    </location>
</feature>
<feature type="strand" evidence="12">
    <location>
        <begin position="278"/>
        <end position="280"/>
    </location>
</feature>
<feature type="turn" evidence="12">
    <location>
        <begin position="281"/>
        <end position="283"/>
    </location>
</feature>
<feature type="helix" evidence="12">
    <location>
        <begin position="291"/>
        <end position="295"/>
    </location>
</feature>
<feature type="helix" evidence="12">
    <location>
        <begin position="299"/>
        <end position="301"/>
    </location>
</feature>
<feature type="strand" evidence="12">
    <location>
        <begin position="303"/>
        <end position="315"/>
    </location>
</feature>
<feature type="strand" evidence="12">
    <location>
        <begin position="318"/>
        <end position="322"/>
    </location>
</feature>
<feature type="helix" evidence="12">
    <location>
        <begin position="324"/>
        <end position="333"/>
    </location>
</feature>
<feature type="helix" evidence="12">
    <location>
        <begin position="335"/>
        <end position="339"/>
    </location>
</feature>
<feature type="helix" evidence="12">
    <location>
        <begin position="345"/>
        <end position="359"/>
    </location>
</feature>
<feature type="turn" evidence="12">
    <location>
        <begin position="360"/>
        <end position="362"/>
    </location>
</feature>
<feature type="strand" evidence="12">
    <location>
        <begin position="363"/>
        <end position="365"/>
    </location>
</feature>
<feature type="helix" evidence="12">
    <location>
        <begin position="366"/>
        <end position="386"/>
    </location>
</feature>
<feature type="turn" evidence="12">
    <location>
        <begin position="387"/>
        <end position="389"/>
    </location>
</feature>
<feature type="strand" evidence="10">
    <location>
        <begin position="399"/>
        <end position="404"/>
    </location>
</feature>
<feature type="helix" evidence="12">
    <location>
        <begin position="410"/>
        <end position="420"/>
    </location>
</feature>
<feature type="strand" evidence="12">
    <location>
        <begin position="426"/>
        <end position="428"/>
    </location>
</feature>
<feature type="turn" evidence="12">
    <location>
        <begin position="430"/>
        <end position="432"/>
    </location>
</feature>
<feature type="strand" evidence="12">
    <location>
        <begin position="439"/>
        <end position="441"/>
    </location>
</feature>
<feature type="helix" evidence="12">
    <location>
        <begin position="450"/>
        <end position="467"/>
    </location>
</feature>